<feature type="chain" id="PRO_0000458229" description="Eukaryotic translation initiation factor 5A-1">
    <location>
        <begin position="1"/>
        <end position="154"/>
    </location>
</feature>
<feature type="modified residue" description="Hypusine" evidence="1">
    <location>
        <position position="50"/>
    </location>
</feature>
<comment type="function">
    <text evidence="2 3">Translation factor that promotes translation elongation and termination, particularly upon ribosome stalling at specific amino acid sequence contexts (By similarity). Binds between the exit (E) and peptidyl (P) site of the ribosome and promotes rescue of stalled ribosome: specifically required for efficient translation of polyproline-containing peptides as well as other motifs that stall the ribosome (By similarity). Acts as a ribosome quality control (RQC) cofactor by joining the RQC complex to facilitate peptidyl transfer during CAT tailing step (By similarity). Also involved in actin dynamics and cell cycle progression, mRNA decay and probably in a pathway involved in stress response and maintenance of cell wall integrity (By similarity). Is required for autophagy by assisting the ribosome in translating the ATG3 protein at a specific amino acid sequence, the 'ASP-ASP-Gly' motif, leading to the increase of the efficiency of ATG3 translation and facilitation of LC3B lipidation and autophagosome formation (By similarity).</text>
</comment>
<comment type="subunit">
    <text evidence="3 4">Binds to 80S ribosomes (PubMed:36653451). Actively translating ribosomes show mutually exclusive binding of eIF5a (eif5a or eif5a2) and eef2/eEF2 (By similarity). Interacts with dapl1 (dapl1.L and dapl1.S); interaction takes place at the polypeptide exit tunnel of hibernating ribosomes and prevents translation (PubMed:36653451).</text>
</comment>
<comment type="subcellular location">
    <subcellularLocation>
        <location evidence="3">Cytoplasm</location>
    </subcellularLocation>
    <subcellularLocation>
        <location evidence="3">Nucleus</location>
    </subcellularLocation>
    <subcellularLocation>
        <location evidence="3">Endoplasmic reticulum membrane</location>
        <topology evidence="3">Peripheral membrane protein</topology>
        <orientation evidence="3">Cytoplasmic side</orientation>
    </subcellularLocation>
    <text evidence="3">Hypusine modification promotes the nuclear export and cytoplasmic localization and there was a dynamic shift in the localization from predominantly cytoplasmic to primarily nuclear under apoptotic inducing conditions.</text>
</comment>
<comment type="PTM">
    <text evidence="3">Lys-50 undergoes hypusination, a unique post-translational modification that consists in the addition of a butylamino group from spermidine to lysine side chain, leading to the formation of the unusual amino acid hypusine. eIF-5As are the only known proteins to undergo this modification, which is essential for their function.</text>
</comment>
<comment type="similarity">
    <text evidence="5">Belongs to the eIF-5A family.</text>
</comment>
<organism>
    <name type="scientific">Xenopus laevis</name>
    <name type="common">African clawed frog</name>
    <dbReference type="NCBI Taxonomy" id="8355"/>
    <lineage>
        <taxon>Eukaryota</taxon>
        <taxon>Metazoa</taxon>
        <taxon>Chordata</taxon>
        <taxon>Craniata</taxon>
        <taxon>Vertebrata</taxon>
        <taxon>Euteleostomi</taxon>
        <taxon>Amphibia</taxon>
        <taxon>Batrachia</taxon>
        <taxon>Anura</taxon>
        <taxon>Pipoidea</taxon>
        <taxon>Pipidae</taxon>
        <taxon>Xenopodinae</taxon>
        <taxon>Xenopus</taxon>
        <taxon>Xenopus</taxon>
    </lineage>
</organism>
<evidence type="ECO:0000250" key="1">
    <source>
        <dbReference type="UniProtKB" id="P10160"/>
    </source>
</evidence>
<evidence type="ECO:0000250" key="2">
    <source>
        <dbReference type="UniProtKB" id="P23301"/>
    </source>
</evidence>
<evidence type="ECO:0000250" key="3">
    <source>
        <dbReference type="UniProtKB" id="P63241"/>
    </source>
</evidence>
<evidence type="ECO:0000269" key="4">
    <source>
    </source>
</evidence>
<evidence type="ECO:0000305" key="5"/>
<evidence type="ECO:0007744" key="6">
    <source>
        <dbReference type="PDB" id="7OYC"/>
    </source>
</evidence>
<proteinExistence type="evidence at protein level"/>
<name>IF5A1_XENLA</name>
<keyword id="KW-0002">3D-structure</keyword>
<keyword id="KW-0963">Cytoplasm</keyword>
<keyword id="KW-0251">Elongation factor</keyword>
<keyword id="KW-0256">Endoplasmic reticulum</keyword>
<keyword id="KW-0385">Hypusine</keyword>
<keyword id="KW-0396">Initiation factor</keyword>
<keyword id="KW-0472">Membrane</keyword>
<keyword id="KW-0539">Nucleus</keyword>
<keyword id="KW-0648">Protein biosynthesis</keyword>
<keyword id="KW-1185">Reference proteome</keyword>
<keyword id="KW-0694">RNA-binding</keyword>
<accession>Q7ZXG3</accession>
<sequence>MADDIDFTSGDAGASSTFPMQCSALRKNGFVVLKGRPCKIVEMSTSKTGKHGHAKVHMVGIDIFSGKKYEDICPSTHNMDVPNIKRCDYQLIGIIDNYLSLLSDSGDVREDLKIPDGDLGKEILAKHEAGEEILVTVLNAMSEECAVALKAMTK</sequence>
<protein>
    <recommendedName>
        <fullName evidence="5">Eukaryotic translation initiation factor 5A-1</fullName>
        <shortName>eIF-5A-1</shortName>
        <shortName>eIF-5A1</shortName>
    </recommendedName>
</protein>
<dbReference type="EMBL" id="CM004474">
    <property type="status" value="NOT_ANNOTATED_CDS"/>
    <property type="molecule type" value="Genomic_DNA"/>
</dbReference>
<dbReference type="EMBL" id="BC045007">
    <property type="protein sequence ID" value="AAH45007.1"/>
    <property type="molecule type" value="mRNA"/>
</dbReference>
<dbReference type="RefSeq" id="NP_001080536.1">
    <property type="nucleotide sequence ID" value="NM_001087067.1"/>
</dbReference>
<dbReference type="RefSeq" id="XP_018117154.1">
    <property type="nucleotide sequence ID" value="XM_018261665.2"/>
</dbReference>
<dbReference type="RefSeq" id="XP_018117155.1">
    <property type="nucleotide sequence ID" value="XM_018261666.2"/>
</dbReference>
<dbReference type="RefSeq" id="XP_018117156.1">
    <property type="nucleotide sequence ID" value="XM_018261667.2"/>
</dbReference>
<dbReference type="RefSeq" id="XP_018117158.1">
    <property type="nucleotide sequence ID" value="XM_018261669.2"/>
</dbReference>
<dbReference type="PDB" id="7OYC">
    <property type="method" value="EM"/>
    <property type="resolution" value="2.40 A"/>
    <property type="chains" value="11=1-154"/>
</dbReference>
<dbReference type="PDBsum" id="7OYC"/>
<dbReference type="EMDB" id="EMD-13113"/>
<dbReference type="SMR" id="Q7ZXG3"/>
<dbReference type="STRING" id="8355.Q7ZXG3"/>
<dbReference type="PaxDb" id="8355-Q7ZXG3"/>
<dbReference type="GeneID" id="380228"/>
<dbReference type="KEGG" id="xla:380228"/>
<dbReference type="AGR" id="Xenbase:XB-GENE-998085"/>
<dbReference type="CTD" id="380228"/>
<dbReference type="Xenbase" id="XB-GENE-998085">
    <property type="gene designation" value="eif5a.L"/>
</dbReference>
<dbReference type="OrthoDB" id="9975114at2759"/>
<dbReference type="CD-CODE" id="78E86D56">
    <property type="entry name" value="Mitochondrial cloud"/>
</dbReference>
<dbReference type="Proteomes" id="UP000186698">
    <property type="component" value="Chromosome 5L"/>
</dbReference>
<dbReference type="Proteomes" id="UP000694892">
    <property type="component" value="Chromosome 5L"/>
</dbReference>
<dbReference type="Bgee" id="380228">
    <property type="expression patterns" value="Expressed in neurula embryo and 19 other cell types or tissues"/>
</dbReference>
<dbReference type="GO" id="GO:0005789">
    <property type="term" value="C:endoplasmic reticulum membrane"/>
    <property type="evidence" value="ECO:0007669"/>
    <property type="project" value="UniProtKB-SubCell"/>
</dbReference>
<dbReference type="GO" id="GO:0005634">
    <property type="term" value="C:nucleus"/>
    <property type="evidence" value="ECO:0007669"/>
    <property type="project" value="UniProtKB-SubCell"/>
</dbReference>
<dbReference type="GO" id="GO:0043022">
    <property type="term" value="F:ribosome binding"/>
    <property type="evidence" value="ECO:0007669"/>
    <property type="project" value="InterPro"/>
</dbReference>
<dbReference type="GO" id="GO:0003723">
    <property type="term" value="F:RNA binding"/>
    <property type="evidence" value="ECO:0007669"/>
    <property type="project" value="UniProtKB-KW"/>
</dbReference>
<dbReference type="GO" id="GO:0003746">
    <property type="term" value="F:translation elongation factor activity"/>
    <property type="evidence" value="ECO:0000318"/>
    <property type="project" value="GO_Central"/>
</dbReference>
<dbReference type="GO" id="GO:0003743">
    <property type="term" value="F:translation initiation factor activity"/>
    <property type="evidence" value="ECO:0007669"/>
    <property type="project" value="UniProtKB-KW"/>
</dbReference>
<dbReference type="GO" id="GO:0045901">
    <property type="term" value="P:positive regulation of translational elongation"/>
    <property type="evidence" value="ECO:0007669"/>
    <property type="project" value="InterPro"/>
</dbReference>
<dbReference type="GO" id="GO:0045905">
    <property type="term" value="P:positive regulation of translational termination"/>
    <property type="evidence" value="ECO:0007669"/>
    <property type="project" value="InterPro"/>
</dbReference>
<dbReference type="GO" id="GO:0006414">
    <property type="term" value="P:translational elongation"/>
    <property type="evidence" value="ECO:0000250"/>
    <property type="project" value="UniProtKB"/>
</dbReference>
<dbReference type="CDD" id="cd04468">
    <property type="entry name" value="S1_eIF5A"/>
    <property type="match status" value="1"/>
</dbReference>
<dbReference type="FunFam" id="2.30.30.30:FF:000007">
    <property type="entry name" value="Eukaryotic translation initiation factor 5A"/>
    <property type="match status" value="1"/>
</dbReference>
<dbReference type="FunFam" id="2.40.50.140:FF:000034">
    <property type="entry name" value="Eukaryotic translation initiation factor 5A"/>
    <property type="match status" value="1"/>
</dbReference>
<dbReference type="Gene3D" id="2.30.30.30">
    <property type="match status" value="1"/>
</dbReference>
<dbReference type="Gene3D" id="2.40.50.140">
    <property type="entry name" value="Nucleic acid-binding proteins"/>
    <property type="match status" value="1"/>
</dbReference>
<dbReference type="InterPro" id="IPR001884">
    <property type="entry name" value="IF5A-like"/>
</dbReference>
<dbReference type="InterPro" id="IPR048670">
    <property type="entry name" value="IF5A-like_N"/>
</dbReference>
<dbReference type="InterPro" id="IPR012340">
    <property type="entry name" value="NA-bd_OB-fold"/>
</dbReference>
<dbReference type="InterPro" id="IPR014722">
    <property type="entry name" value="Rib_uL2_dom2"/>
</dbReference>
<dbReference type="InterPro" id="IPR019769">
    <property type="entry name" value="Trans_elong_IF5A_hypusine_site"/>
</dbReference>
<dbReference type="InterPro" id="IPR020189">
    <property type="entry name" value="Transl_elong_IF5A_C"/>
</dbReference>
<dbReference type="InterPro" id="IPR008991">
    <property type="entry name" value="Translation_prot_SH3-like_sf"/>
</dbReference>
<dbReference type="NCBIfam" id="TIGR00037">
    <property type="entry name" value="eIF_5A"/>
    <property type="match status" value="1"/>
</dbReference>
<dbReference type="PANTHER" id="PTHR11673">
    <property type="entry name" value="TRANSLATION INITIATION FACTOR 5A FAMILY MEMBER"/>
    <property type="match status" value="1"/>
</dbReference>
<dbReference type="Pfam" id="PF01287">
    <property type="entry name" value="eIF-5a"/>
    <property type="match status" value="1"/>
</dbReference>
<dbReference type="Pfam" id="PF21485">
    <property type="entry name" value="IF5A-like_N"/>
    <property type="match status" value="1"/>
</dbReference>
<dbReference type="PIRSF" id="PIRSF003025">
    <property type="entry name" value="eIF5A"/>
    <property type="match status" value="1"/>
</dbReference>
<dbReference type="SMART" id="SM01376">
    <property type="entry name" value="eIF-5a"/>
    <property type="match status" value="1"/>
</dbReference>
<dbReference type="SUPFAM" id="SSF50249">
    <property type="entry name" value="Nucleic acid-binding proteins"/>
    <property type="match status" value="1"/>
</dbReference>
<dbReference type="SUPFAM" id="SSF50104">
    <property type="entry name" value="Translation proteins SH3-like domain"/>
    <property type="match status" value="1"/>
</dbReference>
<dbReference type="PROSITE" id="PS00302">
    <property type="entry name" value="IF5A_HYPUSINE"/>
    <property type="match status" value="1"/>
</dbReference>
<reference key="1">
    <citation type="journal article" date="2016" name="Nature">
        <title>Genome evolution in the allotetraploid frog Xenopus laevis.</title>
        <authorList>
            <person name="Session A.M."/>
            <person name="Uno Y."/>
            <person name="Kwon T."/>
            <person name="Chapman J.A."/>
            <person name="Toyoda A."/>
            <person name="Takahashi S."/>
            <person name="Fukui A."/>
            <person name="Hikosaka A."/>
            <person name="Suzuki A."/>
            <person name="Kondo M."/>
            <person name="van Heeringen S.J."/>
            <person name="Quigley I."/>
            <person name="Heinz S."/>
            <person name="Ogino H."/>
            <person name="Ochi H."/>
            <person name="Hellsten U."/>
            <person name="Lyons J.B."/>
            <person name="Simakov O."/>
            <person name="Putnam N."/>
            <person name="Stites J."/>
            <person name="Kuroki Y."/>
            <person name="Tanaka T."/>
            <person name="Michiue T."/>
            <person name="Watanabe M."/>
            <person name="Bogdanovic O."/>
            <person name="Lister R."/>
            <person name="Georgiou G."/>
            <person name="Paranjpe S.S."/>
            <person name="van Kruijsbergen I."/>
            <person name="Shu S."/>
            <person name="Carlson J."/>
            <person name="Kinoshita T."/>
            <person name="Ohta Y."/>
            <person name="Mawaribuchi S."/>
            <person name="Jenkins J."/>
            <person name="Grimwood J."/>
            <person name="Schmutz J."/>
            <person name="Mitros T."/>
            <person name="Mozaffari S.V."/>
            <person name="Suzuki Y."/>
            <person name="Haramoto Y."/>
            <person name="Yamamoto T.S."/>
            <person name="Takagi C."/>
            <person name="Heald R."/>
            <person name="Miller K."/>
            <person name="Haudenschild C."/>
            <person name="Kitzman J."/>
            <person name="Nakayama T."/>
            <person name="Izutsu Y."/>
            <person name="Robert J."/>
            <person name="Fortriede J."/>
            <person name="Burns K."/>
            <person name="Lotay V."/>
            <person name="Karimi K."/>
            <person name="Yasuoka Y."/>
            <person name="Dichmann D.S."/>
            <person name="Flajnik M.F."/>
            <person name="Houston D.W."/>
            <person name="Shendure J."/>
            <person name="DuPasquier L."/>
            <person name="Vize P.D."/>
            <person name="Zorn A.M."/>
            <person name="Ito M."/>
            <person name="Marcotte E.M."/>
            <person name="Wallingford J.B."/>
            <person name="Ito Y."/>
            <person name="Asashima M."/>
            <person name="Ueno N."/>
            <person name="Matsuda Y."/>
            <person name="Veenstra G.J."/>
            <person name="Fujiyama A."/>
            <person name="Harland R.M."/>
            <person name="Taira M."/>
            <person name="Rokhsar D.S."/>
        </authorList>
    </citation>
    <scope>NUCLEOTIDE SEQUENCE [LARGE SCALE GENOMIC DNA]</scope>
    <source>
        <strain>J</strain>
    </source>
</reference>
<reference key="2">
    <citation type="submission" date="2003-01" db="EMBL/GenBank/DDBJ databases">
        <authorList>
            <consortium name="NIH - Xenopus Gene Collection (XGC) project"/>
        </authorList>
    </citation>
    <scope>NUCLEOTIDE SEQUENCE [LARGE SCALE MRNA]</scope>
    <source>
        <tissue>Embryo</tissue>
    </source>
</reference>
<reference evidence="6" key="3">
    <citation type="journal article" date="2023" name="Nature">
        <title>A molecular network of conserved factors keeps ribosomes dormant in the egg.</title>
        <authorList>
            <person name="Leesch F."/>
            <person name="Lorenzo-Orts L."/>
            <person name="Pribitzer C."/>
            <person name="Grishkovskaya I."/>
            <person name="Roehsner J."/>
            <person name="Chugunova A."/>
            <person name="Matzinger M."/>
            <person name="Roitinger E."/>
            <person name="Belacic K."/>
            <person name="Kandolf S."/>
            <person name="Lin T.Y."/>
            <person name="Mechtler K."/>
            <person name="Meinhart A."/>
            <person name="Haselbach D."/>
            <person name="Pauli A."/>
        </authorList>
    </citation>
    <scope>STRUCTURE BY ELECTRON MICROSCOPY (2.40 ANGSTROMS) IN COMPLEX WITH RIBOSOME AND DAPL1.S</scope>
    <scope>INTERACTION WITH DAPL1</scope>
</reference>
<gene>
    <name type="primary">eif5a.L</name>
</gene>